<dbReference type="EMBL" id="AE009949">
    <property type="protein sequence ID" value="AAL98500.1"/>
    <property type="molecule type" value="Genomic_DNA"/>
</dbReference>
<dbReference type="RefSeq" id="WP_002982634.1">
    <property type="nucleotide sequence ID" value="NC_003485.1"/>
</dbReference>
<dbReference type="SMR" id="Q7CMR3"/>
<dbReference type="KEGG" id="spm:spyM18_2021"/>
<dbReference type="HOGENOM" id="CLU_148518_0_0_9"/>
<dbReference type="GO" id="GO:0022627">
    <property type="term" value="C:cytosolic small ribosomal subunit"/>
    <property type="evidence" value="ECO:0007669"/>
    <property type="project" value="TreeGrafter"/>
</dbReference>
<dbReference type="GO" id="GO:0019843">
    <property type="term" value="F:rRNA binding"/>
    <property type="evidence" value="ECO:0007669"/>
    <property type="project" value="UniProtKB-UniRule"/>
</dbReference>
<dbReference type="GO" id="GO:0003735">
    <property type="term" value="F:structural constituent of ribosome"/>
    <property type="evidence" value="ECO:0007669"/>
    <property type="project" value="InterPro"/>
</dbReference>
<dbReference type="GO" id="GO:0006412">
    <property type="term" value="P:translation"/>
    <property type="evidence" value="ECO:0007669"/>
    <property type="project" value="UniProtKB-UniRule"/>
</dbReference>
<dbReference type="CDD" id="cd00353">
    <property type="entry name" value="Ribosomal_S15p_S13e"/>
    <property type="match status" value="1"/>
</dbReference>
<dbReference type="FunFam" id="1.10.287.10:FF:000002">
    <property type="entry name" value="30S ribosomal protein S15"/>
    <property type="match status" value="1"/>
</dbReference>
<dbReference type="Gene3D" id="6.10.250.3130">
    <property type="match status" value="1"/>
</dbReference>
<dbReference type="Gene3D" id="1.10.287.10">
    <property type="entry name" value="S15/NS1, RNA-binding"/>
    <property type="match status" value="1"/>
</dbReference>
<dbReference type="HAMAP" id="MF_01343_B">
    <property type="entry name" value="Ribosomal_uS15_B"/>
    <property type="match status" value="1"/>
</dbReference>
<dbReference type="InterPro" id="IPR000589">
    <property type="entry name" value="Ribosomal_uS15"/>
</dbReference>
<dbReference type="InterPro" id="IPR005290">
    <property type="entry name" value="Ribosomal_uS15_bac-type"/>
</dbReference>
<dbReference type="InterPro" id="IPR009068">
    <property type="entry name" value="uS15_NS1_RNA-bd_sf"/>
</dbReference>
<dbReference type="NCBIfam" id="TIGR00952">
    <property type="entry name" value="S15_bact"/>
    <property type="match status" value="1"/>
</dbReference>
<dbReference type="PANTHER" id="PTHR23321">
    <property type="entry name" value="RIBOSOMAL PROTEIN S15, BACTERIAL AND ORGANELLAR"/>
    <property type="match status" value="1"/>
</dbReference>
<dbReference type="PANTHER" id="PTHR23321:SF26">
    <property type="entry name" value="SMALL RIBOSOMAL SUBUNIT PROTEIN US15M"/>
    <property type="match status" value="1"/>
</dbReference>
<dbReference type="Pfam" id="PF00312">
    <property type="entry name" value="Ribosomal_S15"/>
    <property type="match status" value="1"/>
</dbReference>
<dbReference type="SMART" id="SM01387">
    <property type="entry name" value="Ribosomal_S15"/>
    <property type="match status" value="1"/>
</dbReference>
<dbReference type="SUPFAM" id="SSF47060">
    <property type="entry name" value="S15/NS1 RNA-binding domain"/>
    <property type="match status" value="1"/>
</dbReference>
<dbReference type="PROSITE" id="PS00362">
    <property type="entry name" value="RIBOSOMAL_S15"/>
    <property type="match status" value="1"/>
</dbReference>
<proteinExistence type="inferred from homology"/>
<organism>
    <name type="scientific">Streptococcus pyogenes serotype M18 (strain MGAS8232)</name>
    <dbReference type="NCBI Taxonomy" id="186103"/>
    <lineage>
        <taxon>Bacteria</taxon>
        <taxon>Bacillati</taxon>
        <taxon>Bacillota</taxon>
        <taxon>Bacilli</taxon>
        <taxon>Lactobacillales</taxon>
        <taxon>Streptococcaceae</taxon>
        <taxon>Streptococcus</taxon>
    </lineage>
</organism>
<gene>
    <name evidence="1" type="primary">rpsO</name>
    <name evidence="1" type="synonym">rps15</name>
    <name type="ordered locus">spyM18_2021</name>
</gene>
<feature type="chain" id="PRO_0000115556" description="Small ribosomal subunit protein uS15">
    <location>
        <begin position="1"/>
        <end position="89"/>
    </location>
</feature>
<name>RS15_STRP8</name>
<keyword id="KW-0687">Ribonucleoprotein</keyword>
<keyword id="KW-0689">Ribosomal protein</keyword>
<keyword id="KW-0694">RNA-binding</keyword>
<keyword id="KW-0699">rRNA-binding</keyword>
<reference key="1">
    <citation type="journal article" date="2002" name="Proc. Natl. Acad. Sci. U.S.A.">
        <title>Genome sequence and comparative microarray analysis of serotype M18 group A Streptococcus strains associated with acute rheumatic fever outbreaks.</title>
        <authorList>
            <person name="Smoot J.C."/>
            <person name="Barbian K.D."/>
            <person name="Van Gompel J.J."/>
            <person name="Smoot L.M."/>
            <person name="Chaussee M.S."/>
            <person name="Sylva G.L."/>
            <person name="Sturdevant D.E."/>
            <person name="Ricklefs S.M."/>
            <person name="Porcella S.F."/>
            <person name="Parkins L.D."/>
            <person name="Beres S.B."/>
            <person name="Campbell D.S."/>
            <person name="Smith T.M."/>
            <person name="Zhang Q."/>
            <person name="Kapur V."/>
            <person name="Daly J.A."/>
            <person name="Veasy L.G."/>
            <person name="Musser J.M."/>
        </authorList>
    </citation>
    <scope>NUCLEOTIDE SEQUENCE [LARGE SCALE GENOMIC DNA]</scope>
    <source>
        <strain>MGAS8232</strain>
    </source>
</reference>
<accession>Q7CMR3</accession>
<sequence length="89" mass="10504">MAISKEKKNEIIAQYARHEGDTGSVEVQVAVLTWEINHLNSHIKEHKKDHATYRGLMKKIGHRRNLLAYLRRTDVNRYRELIQSLGLRR</sequence>
<comment type="function">
    <text evidence="1">One of the primary rRNA binding proteins, it binds directly to 16S rRNA where it helps nucleate assembly of the platform of the 30S subunit by binding and bridging several RNA helices of the 16S rRNA.</text>
</comment>
<comment type="function">
    <text evidence="1">Forms an intersubunit bridge (bridge B4) with the 23S rRNA of the 50S subunit in the ribosome.</text>
</comment>
<comment type="subunit">
    <text evidence="1">Part of the 30S ribosomal subunit. Forms a bridge to the 50S subunit in the 70S ribosome, contacting the 23S rRNA.</text>
</comment>
<comment type="similarity">
    <text evidence="1">Belongs to the universal ribosomal protein uS15 family.</text>
</comment>
<evidence type="ECO:0000255" key="1">
    <source>
        <dbReference type="HAMAP-Rule" id="MF_01343"/>
    </source>
</evidence>
<evidence type="ECO:0000305" key="2"/>
<protein>
    <recommendedName>
        <fullName evidence="1">Small ribosomal subunit protein uS15</fullName>
    </recommendedName>
    <alternativeName>
        <fullName evidence="2">30S ribosomal protein S15</fullName>
    </alternativeName>
</protein>